<reference key="1">
    <citation type="submission" date="2001-07" db="EMBL/GenBank/DDBJ databases">
        <title>Genome-wide discovery and analysis of human seven transmembrane helix receptor genes.</title>
        <authorList>
            <person name="Suwa M."/>
            <person name="Sato T."/>
            <person name="Okouchi I."/>
            <person name="Arita M."/>
            <person name="Futami K."/>
            <person name="Matsumoto S."/>
            <person name="Tsutsumi S."/>
            <person name="Aburatani H."/>
            <person name="Asai K."/>
            <person name="Akiyama Y."/>
        </authorList>
    </citation>
    <scope>NUCLEOTIDE SEQUENCE [GENOMIC DNA]</scope>
</reference>
<reference key="2">
    <citation type="submission" date="2005-09" db="EMBL/GenBank/DDBJ databases">
        <authorList>
            <person name="Mural R.J."/>
            <person name="Istrail S."/>
            <person name="Sutton G.G."/>
            <person name="Florea L."/>
            <person name="Halpern A.L."/>
            <person name="Mobarry C.M."/>
            <person name="Lippert R."/>
            <person name="Walenz B."/>
            <person name="Shatkay H."/>
            <person name="Dew I."/>
            <person name="Miller J.R."/>
            <person name="Flanigan M.J."/>
            <person name="Edwards N.J."/>
            <person name="Bolanos R."/>
            <person name="Fasulo D."/>
            <person name="Halldorsson B.V."/>
            <person name="Hannenhalli S."/>
            <person name="Turner R."/>
            <person name="Yooseph S."/>
            <person name="Lu F."/>
            <person name="Nusskern D.R."/>
            <person name="Shue B.C."/>
            <person name="Zheng X.H."/>
            <person name="Zhong F."/>
            <person name="Delcher A.L."/>
            <person name="Huson D.H."/>
            <person name="Kravitz S.A."/>
            <person name="Mouchard L."/>
            <person name="Reinert K."/>
            <person name="Remington K.A."/>
            <person name="Clark A.G."/>
            <person name="Waterman M.S."/>
            <person name="Eichler E.E."/>
            <person name="Adams M.D."/>
            <person name="Hunkapiller M.W."/>
            <person name="Myers E.W."/>
            <person name="Venter J.C."/>
        </authorList>
    </citation>
    <scope>NUCLEOTIDE SEQUENCE [LARGE SCALE GENOMIC DNA]</scope>
</reference>
<reference key="3">
    <citation type="journal article" date="2004" name="Proc. Natl. Acad. Sci. U.S.A.">
        <title>The human olfactory receptor gene family.</title>
        <authorList>
            <person name="Malnic B."/>
            <person name="Godfrey P.A."/>
            <person name="Buck L.B."/>
        </authorList>
    </citation>
    <scope>IDENTIFICATION</scope>
</reference>
<reference key="4">
    <citation type="journal article" date="2004" name="Proc. Natl. Acad. Sci. U.S.A.">
        <authorList>
            <person name="Malnic B."/>
            <person name="Godfrey P.A."/>
            <person name="Buck L.B."/>
        </authorList>
    </citation>
    <scope>ERRATUM OF PUBMED:14983052</scope>
</reference>
<name>O51H1_HUMAN</name>
<comment type="function">
    <text evidence="3">Odorant receptor.</text>
</comment>
<comment type="subcellular location">
    <subcellularLocation>
        <location>Cell membrane</location>
        <topology>Multi-pass membrane protein</topology>
    </subcellularLocation>
</comment>
<comment type="similarity">
    <text evidence="2">Belongs to the G-protein coupled receptor 1 family.</text>
</comment>
<comment type="online information" name="Human Olfactory Receptor Data Exploratorium (HORDE)">
    <link uri="http://genome.weizmann.ac.il/horde/card/index/symbol:OR51H1P"/>
</comment>
<accession>Q8NH63</accession>
<accession>Q6IFI3</accession>
<organism>
    <name type="scientific">Homo sapiens</name>
    <name type="common">Human</name>
    <dbReference type="NCBI Taxonomy" id="9606"/>
    <lineage>
        <taxon>Eukaryota</taxon>
        <taxon>Metazoa</taxon>
        <taxon>Chordata</taxon>
        <taxon>Craniata</taxon>
        <taxon>Vertebrata</taxon>
        <taxon>Euteleostomi</taxon>
        <taxon>Mammalia</taxon>
        <taxon>Eutheria</taxon>
        <taxon>Euarchontoglires</taxon>
        <taxon>Primates</taxon>
        <taxon>Haplorrhini</taxon>
        <taxon>Catarrhini</taxon>
        <taxon>Hominidae</taxon>
        <taxon>Homo</taxon>
    </lineage>
</organism>
<evidence type="ECO:0000255" key="1"/>
<evidence type="ECO:0000255" key="2">
    <source>
        <dbReference type="PROSITE-ProRule" id="PRU00521"/>
    </source>
</evidence>
<evidence type="ECO:0000305" key="3"/>
<keyword id="KW-1003">Cell membrane</keyword>
<keyword id="KW-1015">Disulfide bond</keyword>
<keyword id="KW-0297">G-protein coupled receptor</keyword>
<keyword id="KW-0325">Glycoprotein</keyword>
<keyword id="KW-0472">Membrane</keyword>
<keyword id="KW-0552">Olfaction</keyword>
<keyword id="KW-0675">Receptor</keyword>
<keyword id="KW-1185">Reference proteome</keyword>
<keyword id="KW-0716">Sensory transduction</keyword>
<keyword id="KW-0807">Transducer</keyword>
<keyword id="KW-0812">Transmembrane</keyword>
<keyword id="KW-1133">Transmembrane helix</keyword>
<sequence>MTNLNASQANHRNFILTGIPGTPDKNPWLAFPLGFLYTLTLLGNGTILAVIKVEPSLHEPTYYFLSILALTDVSLSMSTLPSMLSIYWFNAPQIVFDACIMQMFFIHVFGIVESGVLVSMAFDRFVAIRNPLHYVSILTHDVIRKTGIAVLTRAVCVVFPVPFLIKCLPFCHSNVLSHSYCLHQNMMRLACASTRINSLYGLIVVIFTLGLDVLLTLLSYVLTLKTVLGIVSRGERLKTLSTCLSHMSTVLLFYVPFMGAASMIHRFWEHLSPVVHMVMADIYLLLPPVLNPIVYSVKTKQI</sequence>
<gene>
    <name type="primary">OR51H1</name>
    <name type="synonym">OR51H1P</name>
</gene>
<dbReference type="EMBL" id="AB065527">
    <property type="protein sequence ID" value="BAC05774.1"/>
    <property type="molecule type" value="Genomic_DNA"/>
</dbReference>
<dbReference type="EMBL" id="CH471064">
    <property type="protein sequence ID" value="EAW68824.1"/>
    <property type="molecule type" value="Genomic_DNA"/>
</dbReference>
<dbReference type="EMBL" id="BK004279">
    <property type="protein sequence ID" value="DAA04677.1"/>
    <property type="molecule type" value="Genomic_DNA"/>
</dbReference>
<dbReference type="RefSeq" id="NP_001335220.1">
    <property type="nucleotide sequence ID" value="NM_001348291.1"/>
</dbReference>
<dbReference type="SMR" id="Q8NH63"/>
<dbReference type="FunCoup" id="Q8NH63">
    <property type="interactions" value="89"/>
</dbReference>
<dbReference type="GlyCosmos" id="Q8NH63">
    <property type="glycosylation" value="1 site, No reported glycans"/>
</dbReference>
<dbReference type="GlyGen" id="Q8NH63">
    <property type="glycosylation" value="1 site"/>
</dbReference>
<dbReference type="BioMuta" id="OR51H1"/>
<dbReference type="DMDM" id="38372818"/>
<dbReference type="PaxDb" id="9606-ENSP00000322724"/>
<dbReference type="PeptideAtlas" id="Q8NH63"/>
<dbReference type="DNASU" id="401663"/>
<dbReference type="UCSC" id="uc057ygo.1">
    <property type="organism name" value="human"/>
</dbReference>
<dbReference type="AGR" id="HGNC:14833"/>
<dbReference type="GeneCards" id="OR51H1"/>
<dbReference type="HGNC" id="HGNC:14833">
    <property type="gene designation" value="OR51H1"/>
</dbReference>
<dbReference type="neXtProt" id="NX_Q8NH63"/>
<dbReference type="eggNOG" id="ENOG502RF9W">
    <property type="taxonomic scope" value="Eukaryota"/>
</dbReference>
<dbReference type="HOGENOM" id="CLU_012526_0_0_1"/>
<dbReference type="InParanoid" id="Q8NH63"/>
<dbReference type="PAN-GO" id="Q8NH63">
    <property type="GO annotations" value="2 GO annotations based on evolutionary models"/>
</dbReference>
<dbReference type="PhylomeDB" id="Q8NH63"/>
<dbReference type="TreeFam" id="TF342735"/>
<dbReference type="PathwayCommons" id="Q8NH63"/>
<dbReference type="Reactome" id="R-HSA-9752946">
    <property type="pathway name" value="Expression and translocation of olfactory receptors"/>
</dbReference>
<dbReference type="BioGRID-ORCS" id="401663">
    <property type="hits" value="0 hits in 93 CRISPR screens"/>
</dbReference>
<dbReference type="GenomeRNAi" id="401663"/>
<dbReference type="Pharos" id="Q8NH63">
    <property type="development level" value="Tdark"/>
</dbReference>
<dbReference type="PRO" id="PR:Q8NH63"/>
<dbReference type="Proteomes" id="UP000005640">
    <property type="component" value="Unplaced"/>
</dbReference>
<dbReference type="RNAct" id="Q8NH63">
    <property type="molecule type" value="protein"/>
</dbReference>
<dbReference type="GO" id="GO:0005886">
    <property type="term" value="C:plasma membrane"/>
    <property type="evidence" value="ECO:0000318"/>
    <property type="project" value="GO_Central"/>
</dbReference>
<dbReference type="GO" id="GO:0004930">
    <property type="term" value="F:G protein-coupled receptor activity"/>
    <property type="evidence" value="ECO:0007669"/>
    <property type="project" value="UniProtKB-KW"/>
</dbReference>
<dbReference type="GO" id="GO:0004984">
    <property type="term" value="F:olfactory receptor activity"/>
    <property type="evidence" value="ECO:0000318"/>
    <property type="project" value="GO_Central"/>
</dbReference>
<dbReference type="CDD" id="cd15222">
    <property type="entry name" value="7tmA_OR51-like"/>
    <property type="match status" value="1"/>
</dbReference>
<dbReference type="FunFam" id="1.20.1070.10:FF:000002">
    <property type="entry name" value="Olfactory receptor"/>
    <property type="match status" value="1"/>
</dbReference>
<dbReference type="Gene3D" id="1.20.1070.10">
    <property type="entry name" value="Rhodopsin 7-helix transmembrane proteins"/>
    <property type="match status" value="1"/>
</dbReference>
<dbReference type="InterPro" id="IPR000276">
    <property type="entry name" value="GPCR_Rhodpsn"/>
</dbReference>
<dbReference type="InterPro" id="IPR017452">
    <property type="entry name" value="GPCR_Rhodpsn_7TM"/>
</dbReference>
<dbReference type="InterPro" id="IPR000725">
    <property type="entry name" value="Olfact_rcpt"/>
</dbReference>
<dbReference type="InterPro" id="IPR050402">
    <property type="entry name" value="OR51/52/56-like"/>
</dbReference>
<dbReference type="PANTHER" id="PTHR26450:SF53">
    <property type="entry name" value="OLFACTORY RECEPTOR 51H1"/>
    <property type="match status" value="1"/>
</dbReference>
<dbReference type="PANTHER" id="PTHR26450">
    <property type="entry name" value="OLFACTORY RECEPTOR 56B1-RELATED"/>
    <property type="match status" value="1"/>
</dbReference>
<dbReference type="Pfam" id="PF13853">
    <property type="entry name" value="7tm_4"/>
    <property type="match status" value="1"/>
</dbReference>
<dbReference type="PRINTS" id="PR00237">
    <property type="entry name" value="GPCRRHODOPSN"/>
</dbReference>
<dbReference type="PRINTS" id="PR00245">
    <property type="entry name" value="OLFACTORYR"/>
</dbReference>
<dbReference type="SUPFAM" id="SSF81321">
    <property type="entry name" value="Family A G protein-coupled receptor-like"/>
    <property type="match status" value="1"/>
</dbReference>
<dbReference type="PROSITE" id="PS00237">
    <property type="entry name" value="G_PROTEIN_RECEP_F1_1"/>
    <property type="match status" value="1"/>
</dbReference>
<dbReference type="PROSITE" id="PS50262">
    <property type="entry name" value="G_PROTEIN_RECEP_F1_2"/>
    <property type="match status" value="1"/>
</dbReference>
<protein>
    <recommendedName>
        <fullName>Olfactory receptor 51H1</fullName>
    </recommendedName>
    <alternativeName>
        <fullName>Olfactory receptor OR11-25</fullName>
    </alternativeName>
</protein>
<feature type="chain" id="PRO_0000150756" description="Olfactory receptor 51H1">
    <location>
        <begin position="1"/>
        <end position="302"/>
    </location>
</feature>
<feature type="topological domain" description="Extracellular" evidence="1">
    <location>
        <begin position="1"/>
        <end position="27"/>
    </location>
</feature>
<feature type="transmembrane region" description="Helical; Name=1" evidence="1">
    <location>
        <begin position="28"/>
        <end position="48"/>
    </location>
</feature>
<feature type="topological domain" description="Cytoplasmic" evidence="1">
    <location>
        <begin position="49"/>
        <end position="56"/>
    </location>
</feature>
<feature type="transmembrane region" description="Helical; Name=2" evidence="1">
    <location>
        <begin position="57"/>
        <end position="77"/>
    </location>
</feature>
<feature type="topological domain" description="Extracellular" evidence="1">
    <location>
        <begin position="78"/>
        <end position="101"/>
    </location>
</feature>
<feature type="transmembrane region" description="Helical; Name=3" evidence="1">
    <location>
        <begin position="102"/>
        <end position="122"/>
    </location>
</feature>
<feature type="topological domain" description="Cytoplasmic" evidence="1">
    <location>
        <begin position="123"/>
        <end position="141"/>
    </location>
</feature>
<feature type="transmembrane region" description="Helical; Name=4" evidence="1">
    <location>
        <begin position="142"/>
        <end position="162"/>
    </location>
</feature>
<feature type="topological domain" description="Extracellular" evidence="1">
    <location>
        <begin position="163"/>
        <end position="198"/>
    </location>
</feature>
<feature type="transmembrane region" description="Helical; Name=5" evidence="1">
    <location>
        <begin position="199"/>
        <end position="219"/>
    </location>
</feature>
<feature type="topological domain" description="Cytoplasmic" evidence="1">
    <location>
        <begin position="220"/>
        <end position="239"/>
    </location>
</feature>
<feature type="transmembrane region" description="Helical; Name=6" evidence="1">
    <location>
        <begin position="240"/>
        <end position="260"/>
    </location>
</feature>
<feature type="topological domain" description="Extracellular" evidence="1">
    <location>
        <begin position="261"/>
        <end position="276"/>
    </location>
</feature>
<feature type="transmembrane region" description="Helical; Name=7" evidence="1">
    <location>
        <begin position="277"/>
        <end position="297"/>
    </location>
</feature>
<feature type="topological domain" description="Cytoplasmic" evidence="1">
    <location>
        <begin position="298"/>
        <end position="302"/>
    </location>
</feature>
<feature type="glycosylation site" description="N-linked (GlcNAc...) asparagine" evidence="1">
    <location>
        <position position="5"/>
    </location>
</feature>
<feature type="disulfide bond" evidence="2">
    <location>
        <begin position="99"/>
        <end position="191"/>
    </location>
</feature>
<proteinExistence type="inferred from homology"/>